<accession>Q4FTQ5</accession>
<sequence length="347" mass="39109">MTNAVQTHMPAARAKPKKAIQGEKLRGYDKVARIPIKIIPTVEAKKKPDWIRVKLSSPAEVARIKSTLREQKLYTVCEEAACPNLPQCFADGTATFMIMGDICTRRCPFCDVGHGRPNELDKDEPRHTAETIQGLGLKYAVITSVDRDDLKDGGAAHFVEVLNESRALSPNCLIEILVPDFRGRMDIALDLLTETAPDVFNHNIETVPRLYKAFRPGSDYQHSLDLLKIYKERRPDIATKCGFMVGLGETEEEIYKLLDDLKAHNVDMITVGQYLQPSKDHAPVDRYVHPDEFQRYMDYGKKIGFFNIWAGPMVRSSYFADRQYYGEDCPAPIRSKKALAAEGKLGC</sequence>
<comment type="function">
    <text evidence="1">Catalyzes the radical-mediated insertion of two sulfur atoms into the C-6 and C-8 positions of the octanoyl moiety bound to the lipoyl domains of lipoate-dependent enzymes, thereby converting the octanoylated domains into lipoylated derivatives.</text>
</comment>
<comment type="catalytic activity">
    <reaction evidence="1">
        <text>[[Fe-S] cluster scaffold protein carrying a second [4Fe-4S](2+) cluster] + N(6)-octanoyl-L-lysyl-[protein] + 2 oxidized [2Fe-2S]-[ferredoxin] + 2 S-adenosyl-L-methionine + 4 H(+) = [[Fe-S] cluster scaffold protein] + N(6)-[(R)-dihydrolipoyl]-L-lysyl-[protein] + 4 Fe(3+) + 2 hydrogen sulfide + 2 5'-deoxyadenosine + 2 L-methionine + 2 reduced [2Fe-2S]-[ferredoxin]</text>
        <dbReference type="Rhea" id="RHEA:16585"/>
        <dbReference type="Rhea" id="RHEA-COMP:9928"/>
        <dbReference type="Rhea" id="RHEA-COMP:10000"/>
        <dbReference type="Rhea" id="RHEA-COMP:10001"/>
        <dbReference type="Rhea" id="RHEA-COMP:10475"/>
        <dbReference type="Rhea" id="RHEA-COMP:14568"/>
        <dbReference type="Rhea" id="RHEA-COMP:14569"/>
        <dbReference type="ChEBI" id="CHEBI:15378"/>
        <dbReference type="ChEBI" id="CHEBI:17319"/>
        <dbReference type="ChEBI" id="CHEBI:29034"/>
        <dbReference type="ChEBI" id="CHEBI:29919"/>
        <dbReference type="ChEBI" id="CHEBI:33722"/>
        <dbReference type="ChEBI" id="CHEBI:33737"/>
        <dbReference type="ChEBI" id="CHEBI:33738"/>
        <dbReference type="ChEBI" id="CHEBI:57844"/>
        <dbReference type="ChEBI" id="CHEBI:59789"/>
        <dbReference type="ChEBI" id="CHEBI:78809"/>
        <dbReference type="ChEBI" id="CHEBI:83100"/>
        <dbReference type="EC" id="2.8.1.8"/>
    </reaction>
</comment>
<comment type="cofactor">
    <cofactor evidence="1">
        <name>[4Fe-4S] cluster</name>
        <dbReference type="ChEBI" id="CHEBI:49883"/>
    </cofactor>
    <text evidence="1">Binds 2 [4Fe-4S] clusters per subunit. One cluster is coordinated with 3 cysteines and an exchangeable S-adenosyl-L-methionine.</text>
</comment>
<comment type="pathway">
    <text evidence="1">Protein modification; protein lipoylation via endogenous pathway; protein N(6)-(lipoyl)lysine from octanoyl-[acyl-carrier-protein]: step 2/2.</text>
</comment>
<comment type="subcellular location">
    <subcellularLocation>
        <location evidence="1">Cytoplasm</location>
    </subcellularLocation>
</comment>
<comment type="similarity">
    <text evidence="1">Belongs to the radical SAM superfamily. Lipoyl synthase family.</text>
</comment>
<proteinExistence type="inferred from homology"/>
<dbReference type="EC" id="2.8.1.8" evidence="1"/>
<dbReference type="EMBL" id="CP000082">
    <property type="protein sequence ID" value="AAZ18603.1"/>
    <property type="molecule type" value="Genomic_DNA"/>
</dbReference>
<dbReference type="RefSeq" id="WP_011280030.1">
    <property type="nucleotide sequence ID" value="NC_007204.1"/>
</dbReference>
<dbReference type="SMR" id="Q4FTQ5"/>
<dbReference type="STRING" id="259536.Psyc_0749"/>
<dbReference type="KEGG" id="par:Psyc_0749"/>
<dbReference type="eggNOG" id="COG0320">
    <property type="taxonomic scope" value="Bacteria"/>
</dbReference>
<dbReference type="HOGENOM" id="CLU_033144_2_1_6"/>
<dbReference type="OrthoDB" id="9787898at2"/>
<dbReference type="UniPathway" id="UPA00538">
    <property type="reaction ID" value="UER00593"/>
</dbReference>
<dbReference type="Proteomes" id="UP000000546">
    <property type="component" value="Chromosome"/>
</dbReference>
<dbReference type="GO" id="GO:0005737">
    <property type="term" value="C:cytoplasm"/>
    <property type="evidence" value="ECO:0007669"/>
    <property type="project" value="UniProtKB-SubCell"/>
</dbReference>
<dbReference type="GO" id="GO:0051539">
    <property type="term" value="F:4 iron, 4 sulfur cluster binding"/>
    <property type="evidence" value="ECO:0007669"/>
    <property type="project" value="UniProtKB-UniRule"/>
</dbReference>
<dbReference type="GO" id="GO:0016992">
    <property type="term" value="F:lipoate synthase activity"/>
    <property type="evidence" value="ECO:0007669"/>
    <property type="project" value="UniProtKB-UniRule"/>
</dbReference>
<dbReference type="GO" id="GO:0046872">
    <property type="term" value="F:metal ion binding"/>
    <property type="evidence" value="ECO:0007669"/>
    <property type="project" value="UniProtKB-KW"/>
</dbReference>
<dbReference type="CDD" id="cd01335">
    <property type="entry name" value="Radical_SAM"/>
    <property type="match status" value="1"/>
</dbReference>
<dbReference type="FunFam" id="3.20.20.70:FF:000040">
    <property type="entry name" value="Lipoyl synthase"/>
    <property type="match status" value="1"/>
</dbReference>
<dbReference type="Gene3D" id="3.20.20.70">
    <property type="entry name" value="Aldolase class I"/>
    <property type="match status" value="1"/>
</dbReference>
<dbReference type="HAMAP" id="MF_00206">
    <property type="entry name" value="Lipoyl_synth"/>
    <property type="match status" value="1"/>
</dbReference>
<dbReference type="InterPro" id="IPR013785">
    <property type="entry name" value="Aldolase_TIM"/>
</dbReference>
<dbReference type="InterPro" id="IPR006638">
    <property type="entry name" value="Elp3/MiaA/NifB-like_rSAM"/>
</dbReference>
<dbReference type="InterPro" id="IPR031691">
    <property type="entry name" value="LIAS_N"/>
</dbReference>
<dbReference type="InterPro" id="IPR003698">
    <property type="entry name" value="Lipoyl_synth"/>
</dbReference>
<dbReference type="InterPro" id="IPR007197">
    <property type="entry name" value="rSAM"/>
</dbReference>
<dbReference type="NCBIfam" id="TIGR00510">
    <property type="entry name" value="lipA"/>
    <property type="match status" value="1"/>
</dbReference>
<dbReference type="NCBIfam" id="NF004019">
    <property type="entry name" value="PRK05481.1"/>
    <property type="match status" value="1"/>
</dbReference>
<dbReference type="NCBIfam" id="NF009544">
    <property type="entry name" value="PRK12928.1"/>
    <property type="match status" value="1"/>
</dbReference>
<dbReference type="PANTHER" id="PTHR10949">
    <property type="entry name" value="LIPOYL SYNTHASE"/>
    <property type="match status" value="1"/>
</dbReference>
<dbReference type="PANTHER" id="PTHR10949:SF0">
    <property type="entry name" value="LIPOYL SYNTHASE, MITOCHONDRIAL"/>
    <property type="match status" value="1"/>
</dbReference>
<dbReference type="Pfam" id="PF16881">
    <property type="entry name" value="LIAS_N"/>
    <property type="match status" value="1"/>
</dbReference>
<dbReference type="Pfam" id="PF04055">
    <property type="entry name" value="Radical_SAM"/>
    <property type="match status" value="1"/>
</dbReference>
<dbReference type="PIRSF" id="PIRSF005963">
    <property type="entry name" value="Lipoyl_synth"/>
    <property type="match status" value="1"/>
</dbReference>
<dbReference type="SFLD" id="SFLDF00271">
    <property type="entry name" value="lipoyl_synthase"/>
    <property type="match status" value="1"/>
</dbReference>
<dbReference type="SFLD" id="SFLDG01058">
    <property type="entry name" value="lipoyl_synthase_like"/>
    <property type="match status" value="1"/>
</dbReference>
<dbReference type="SMART" id="SM00729">
    <property type="entry name" value="Elp3"/>
    <property type="match status" value="1"/>
</dbReference>
<dbReference type="SUPFAM" id="SSF102114">
    <property type="entry name" value="Radical SAM enzymes"/>
    <property type="match status" value="1"/>
</dbReference>
<dbReference type="PROSITE" id="PS51918">
    <property type="entry name" value="RADICAL_SAM"/>
    <property type="match status" value="1"/>
</dbReference>
<reference key="1">
    <citation type="journal article" date="2010" name="Appl. Environ. Microbiol.">
        <title>The genome sequence of Psychrobacter arcticus 273-4, a psychroactive Siberian permafrost bacterium, reveals mechanisms for adaptation to low-temperature growth.</title>
        <authorList>
            <person name="Ayala-del-Rio H.L."/>
            <person name="Chain P.S."/>
            <person name="Grzymski J.J."/>
            <person name="Ponder M.A."/>
            <person name="Ivanova N."/>
            <person name="Bergholz P.W."/>
            <person name="Di Bartolo G."/>
            <person name="Hauser L."/>
            <person name="Land M."/>
            <person name="Bakermans C."/>
            <person name="Rodrigues D."/>
            <person name="Klappenbach J."/>
            <person name="Zarka D."/>
            <person name="Larimer F."/>
            <person name="Richardson P."/>
            <person name="Murray A."/>
            <person name="Thomashow M."/>
            <person name="Tiedje J.M."/>
        </authorList>
    </citation>
    <scope>NUCLEOTIDE SEQUENCE [LARGE SCALE GENOMIC DNA]</scope>
    <source>
        <strain>DSM 17307 / VKM B-2377 / 273-4</strain>
    </source>
</reference>
<name>LIPA_PSYA2</name>
<organism>
    <name type="scientific">Psychrobacter arcticus (strain DSM 17307 / VKM B-2377 / 273-4)</name>
    <dbReference type="NCBI Taxonomy" id="259536"/>
    <lineage>
        <taxon>Bacteria</taxon>
        <taxon>Pseudomonadati</taxon>
        <taxon>Pseudomonadota</taxon>
        <taxon>Gammaproteobacteria</taxon>
        <taxon>Moraxellales</taxon>
        <taxon>Moraxellaceae</taxon>
        <taxon>Psychrobacter</taxon>
    </lineage>
</organism>
<keyword id="KW-0004">4Fe-4S</keyword>
<keyword id="KW-0963">Cytoplasm</keyword>
<keyword id="KW-0408">Iron</keyword>
<keyword id="KW-0411">Iron-sulfur</keyword>
<keyword id="KW-0479">Metal-binding</keyword>
<keyword id="KW-1185">Reference proteome</keyword>
<keyword id="KW-0949">S-adenosyl-L-methionine</keyword>
<keyword id="KW-0808">Transferase</keyword>
<feature type="chain" id="PRO_0000325294" description="Lipoyl synthase">
    <location>
        <begin position="1"/>
        <end position="347"/>
    </location>
</feature>
<feature type="domain" description="Radical SAM core" evidence="2">
    <location>
        <begin position="89"/>
        <end position="306"/>
    </location>
</feature>
<feature type="binding site" evidence="1">
    <location>
        <position position="77"/>
    </location>
    <ligand>
        <name>[4Fe-4S] cluster</name>
        <dbReference type="ChEBI" id="CHEBI:49883"/>
        <label>1</label>
    </ligand>
</feature>
<feature type="binding site" evidence="1">
    <location>
        <position position="82"/>
    </location>
    <ligand>
        <name>[4Fe-4S] cluster</name>
        <dbReference type="ChEBI" id="CHEBI:49883"/>
        <label>1</label>
    </ligand>
</feature>
<feature type="binding site" evidence="1">
    <location>
        <position position="88"/>
    </location>
    <ligand>
        <name>[4Fe-4S] cluster</name>
        <dbReference type="ChEBI" id="CHEBI:49883"/>
        <label>1</label>
    </ligand>
</feature>
<feature type="binding site" evidence="1">
    <location>
        <position position="103"/>
    </location>
    <ligand>
        <name>[4Fe-4S] cluster</name>
        <dbReference type="ChEBI" id="CHEBI:49883"/>
        <label>2</label>
        <note>4Fe-4S-S-AdoMet</note>
    </ligand>
</feature>
<feature type="binding site" evidence="1">
    <location>
        <position position="107"/>
    </location>
    <ligand>
        <name>[4Fe-4S] cluster</name>
        <dbReference type="ChEBI" id="CHEBI:49883"/>
        <label>2</label>
        <note>4Fe-4S-S-AdoMet</note>
    </ligand>
</feature>
<feature type="binding site" evidence="1">
    <location>
        <position position="110"/>
    </location>
    <ligand>
        <name>[4Fe-4S] cluster</name>
        <dbReference type="ChEBI" id="CHEBI:49883"/>
        <label>2</label>
        <note>4Fe-4S-S-AdoMet</note>
    </ligand>
</feature>
<feature type="binding site" evidence="1">
    <location>
        <position position="317"/>
    </location>
    <ligand>
        <name>[4Fe-4S] cluster</name>
        <dbReference type="ChEBI" id="CHEBI:49883"/>
        <label>1</label>
    </ligand>
</feature>
<evidence type="ECO:0000255" key="1">
    <source>
        <dbReference type="HAMAP-Rule" id="MF_00206"/>
    </source>
</evidence>
<evidence type="ECO:0000255" key="2">
    <source>
        <dbReference type="PROSITE-ProRule" id="PRU01266"/>
    </source>
</evidence>
<gene>
    <name evidence="1" type="primary">lipA</name>
    <name type="ordered locus">Psyc_0749</name>
</gene>
<protein>
    <recommendedName>
        <fullName evidence="1">Lipoyl synthase</fullName>
        <ecNumber evidence="1">2.8.1.8</ecNumber>
    </recommendedName>
    <alternativeName>
        <fullName evidence="1">Lip-syn</fullName>
        <shortName evidence="1">LS</shortName>
    </alternativeName>
    <alternativeName>
        <fullName evidence="1">Lipoate synthase</fullName>
    </alternativeName>
    <alternativeName>
        <fullName evidence="1">Lipoic acid synthase</fullName>
    </alternativeName>
    <alternativeName>
        <fullName evidence="1">Sulfur insertion protein LipA</fullName>
    </alternativeName>
</protein>